<feature type="chain" id="PRO_0000387446" description="tRNA1(Val) (adenine(37)-N6)-methyltransferase">
    <location>
        <begin position="1"/>
        <end position="239"/>
    </location>
</feature>
<proteinExistence type="inferred from homology"/>
<accession>Q87SB8</accession>
<protein>
    <recommendedName>
        <fullName evidence="1">tRNA1(Val) (adenine(37)-N6)-methyltransferase</fullName>
        <ecNumber evidence="1">2.1.1.223</ecNumber>
    </recommendedName>
    <alternativeName>
        <fullName evidence="1">tRNA m6A37 methyltransferase</fullName>
    </alternativeName>
</protein>
<evidence type="ECO:0000255" key="1">
    <source>
        <dbReference type="HAMAP-Rule" id="MF_01872"/>
    </source>
</evidence>
<sequence length="239" mass="26768">MKSGKFQTKGFKFKQFCIEGGESGMPVSTDGVMLGAWMESPSPAHILDIGTGTGLLALMCAQRFPDAKITAVDIETTAVEAASHNFSHSPWHDRLSVQHTDVLIFSPPQRFQRIVCNPPYFNTGEQAKQSQRATARHTDSLRHDALLKCCYQLLDAEGKASFVLPITEGELFIELALTQGWSLSRLCRVQPSEKKPVHRLLFELAKQPCDTQESHLIIHSSDGYSDDFVRLTHEFYLKM</sequence>
<gene>
    <name type="ordered locus">VP0506</name>
</gene>
<reference key="1">
    <citation type="journal article" date="2003" name="Lancet">
        <title>Genome sequence of Vibrio parahaemolyticus: a pathogenic mechanism distinct from that of V. cholerae.</title>
        <authorList>
            <person name="Makino K."/>
            <person name="Oshima K."/>
            <person name="Kurokawa K."/>
            <person name="Yokoyama K."/>
            <person name="Uda T."/>
            <person name="Tagomori K."/>
            <person name="Iijima Y."/>
            <person name="Najima M."/>
            <person name="Nakano M."/>
            <person name="Yamashita A."/>
            <person name="Kubota Y."/>
            <person name="Kimura S."/>
            <person name="Yasunaga T."/>
            <person name="Honda T."/>
            <person name="Shinagawa H."/>
            <person name="Hattori M."/>
            <person name="Iida T."/>
        </authorList>
    </citation>
    <scope>NUCLEOTIDE SEQUENCE [LARGE SCALE GENOMIC DNA]</scope>
    <source>
        <strain>RIMD 2210633</strain>
    </source>
</reference>
<dbReference type="EC" id="2.1.1.223" evidence="1"/>
<dbReference type="EMBL" id="BA000031">
    <property type="protein sequence ID" value="BAC58769.1"/>
    <property type="molecule type" value="Genomic_DNA"/>
</dbReference>
<dbReference type="RefSeq" id="NP_796885.1">
    <property type="nucleotide sequence ID" value="NC_004603.1"/>
</dbReference>
<dbReference type="RefSeq" id="WP_005488675.1">
    <property type="nucleotide sequence ID" value="NC_004603.1"/>
</dbReference>
<dbReference type="SMR" id="Q87SB8"/>
<dbReference type="GeneID" id="1187974"/>
<dbReference type="KEGG" id="vpa:VP0506"/>
<dbReference type="PATRIC" id="fig|223926.6.peg.482"/>
<dbReference type="eggNOG" id="COG4123">
    <property type="taxonomic scope" value="Bacteria"/>
</dbReference>
<dbReference type="HOGENOM" id="CLU_061983_0_0_6"/>
<dbReference type="Proteomes" id="UP000002493">
    <property type="component" value="Chromosome 1"/>
</dbReference>
<dbReference type="GO" id="GO:0005737">
    <property type="term" value="C:cytoplasm"/>
    <property type="evidence" value="ECO:0007669"/>
    <property type="project" value="UniProtKB-SubCell"/>
</dbReference>
<dbReference type="GO" id="GO:0003676">
    <property type="term" value="F:nucleic acid binding"/>
    <property type="evidence" value="ECO:0007669"/>
    <property type="project" value="InterPro"/>
</dbReference>
<dbReference type="GO" id="GO:0016430">
    <property type="term" value="F:tRNA (adenine-N6)-methyltransferase activity"/>
    <property type="evidence" value="ECO:0007669"/>
    <property type="project" value="UniProtKB-UniRule"/>
</dbReference>
<dbReference type="GO" id="GO:0032259">
    <property type="term" value="P:methylation"/>
    <property type="evidence" value="ECO:0007669"/>
    <property type="project" value="UniProtKB-KW"/>
</dbReference>
<dbReference type="GO" id="GO:0008033">
    <property type="term" value="P:tRNA processing"/>
    <property type="evidence" value="ECO:0007669"/>
    <property type="project" value="UniProtKB-UniRule"/>
</dbReference>
<dbReference type="CDD" id="cd02440">
    <property type="entry name" value="AdoMet_MTases"/>
    <property type="match status" value="1"/>
</dbReference>
<dbReference type="Gene3D" id="3.40.50.150">
    <property type="entry name" value="Vaccinia Virus protein VP39"/>
    <property type="match status" value="1"/>
</dbReference>
<dbReference type="HAMAP" id="MF_01872">
    <property type="entry name" value="tRNA_methyltr_YfiC"/>
    <property type="match status" value="1"/>
</dbReference>
<dbReference type="InterPro" id="IPR002052">
    <property type="entry name" value="DNA_methylase_N6_adenine_CS"/>
</dbReference>
<dbReference type="InterPro" id="IPR029063">
    <property type="entry name" value="SAM-dependent_MTases_sf"/>
</dbReference>
<dbReference type="InterPro" id="IPR007848">
    <property type="entry name" value="Small_mtfrase_dom"/>
</dbReference>
<dbReference type="InterPro" id="IPR050210">
    <property type="entry name" value="tRNA_Adenine-N(6)_MTase"/>
</dbReference>
<dbReference type="InterPro" id="IPR022882">
    <property type="entry name" value="tRNA_adenine-N6_MeTrfase"/>
</dbReference>
<dbReference type="PANTHER" id="PTHR47739">
    <property type="entry name" value="TRNA1(VAL) (ADENINE(37)-N6)-METHYLTRANSFERASE"/>
    <property type="match status" value="1"/>
</dbReference>
<dbReference type="PANTHER" id="PTHR47739:SF1">
    <property type="entry name" value="TRNA1(VAL) (ADENINE(37)-N6)-METHYLTRANSFERASE"/>
    <property type="match status" value="1"/>
</dbReference>
<dbReference type="Pfam" id="PF05175">
    <property type="entry name" value="MTS"/>
    <property type="match status" value="1"/>
</dbReference>
<dbReference type="SUPFAM" id="SSF53335">
    <property type="entry name" value="S-adenosyl-L-methionine-dependent methyltransferases"/>
    <property type="match status" value="1"/>
</dbReference>
<dbReference type="PROSITE" id="PS00092">
    <property type="entry name" value="N6_MTASE"/>
    <property type="match status" value="1"/>
</dbReference>
<keyword id="KW-0963">Cytoplasm</keyword>
<keyword id="KW-0489">Methyltransferase</keyword>
<keyword id="KW-0949">S-adenosyl-L-methionine</keyword>
<keyword id="KW-0808">Transferase</keyword>
<keyword id="KW-0819">tRNA processing</keyword>
<organism>
    <name type="scientific">Vibrio parahaemolyticus serotype O3:K6 (strain RIMD 2210633)</name>
    <dbReference type="NCBI Taxonomy" id="223926"/>
    <lineage>
        <taxon>Bacteria</taxon>
        <taxon>Pseudomonadati</taxon>
        <taxon>Pseudomonadota</taxon>
        <taxon>Gammaproteobacteria</taxon>
        <taxon>Vibrionales</taxon>
        <taxon>Vibrionaceae</taxon>
        <taxon>Vibrio</taxon>
    </lineage>
</organism>
<comment type="function">
    <text evidence="1">Specifically methylates the adenine in position 37 of tRNA(1)(Val) (anticodon cmo5UAC).</text>
</comment>
<comment type="catalytic activity">
    <reaction evidence="1">
        <text>adenosine(37) in tRNA1(Val) + S-adenosyl-L-methionine = N(6)-methyladenosine(37) in tRNA1(Val) + S-adenosyl-L-homocysteine + H(+)</text>
        <dbReference type="Rhea" id="RHEA:43160"/>
        <dbReference type="Rhea" id="RHEA-COMP:10369"/>
        <dbReference type="Rhea" id="RHEA-COMP:10370"/>
        <dbReference type="ChEBI" id="CHEBI:15378"/>
        <dbReference type="ChEBI" id="CHEBI:57856"/>
        <dbReference type="ChEBI" id="CHEBI:59789"/>
        <dbReference type="ChEBI" id="CHEBI:74411"/>
        <dbReference type="ChEBI" id="CHEBI:74449"/>
        <dbReference type="EC" id="2.1.1.223"/>
    </reaction>
</comment>
<comment type="subcellular location">
    <subcellularLocation>
        <location evidence="1">Cytoplasm</location>
    </subcellularLocation>
</comment>
<comment type="similarity">
    <text evidence="1">Belongs to the methyltransferase superfamily. tRNA (adenine-N(6)-)-methyltransferase family.</text>
</comment>
<name>TRMN6_VIBPA</name>